<organism>
    <name type="scientific">Conus geographus</name>
    <name type="common">Geography cone</name>
    <name type="synonym">Nubecula geographus</name>
    <dbReference type="NCBI Taxonomy" id="6491"/>
    <lineage>
        <taxon>Eukaryota</taxon>
        <taxon>Metazoa</taxon>
        <taxon>Spiralia</taxon>
        <taxon>Lophotrochozoa</taxon>
        <taxon>Mollusca</taxon>
        <taxon>Gastropoda</taxon>
        <taxon>Caenogastropoda</taxon>
        <taxon>Neogastropoda</taxon>
        <taxon>Conoidea</taxon>
        <taxon>Conidae</taxon>
        <taxon>Conus</taxon>
        <taxon>Gastridium</taxon>
    </lineage>
</organism>
<name>CAIB_CONGE</name>
<accession>X5IGW1</accession>
<evidence type="ECO:0000250" key="1">
    <source>
        <dbReference type="UniProtKB" id="X5I9Y2"/>
    </source>
</evidence>
<evidence type="ECO:0000255" key="2"/>
<evidence type="ECO:0000269" key="3">
    <source>
    </source>
</evidence>
<evidence type="ECO:0000303" key="4">
    <source>
    </source>
</evidence>
<evidence type="ECO:0000305" key="5"/>
<evidence type="ECO:0000305" key="6">
    <source>
    </source>
</evidence>
<evidence type="ECO:0000312" key="7">
    <source>
        <dbReference type="EMBL" id="BAO65576.1"/>
    </source>
</evidence>
<feature type="signal peptide" evidence="2">
    <location>
        <begin position="1"/>
        <end position="21"/>
    </location>
</feature>
<feature type="propeptide" id="PRO_0000454097" evidence="6">
    <location>
        <begin position="22"/>
        <end position="49"/>
    </location>
</feature>
<feature type="peptide" id="PRO_5004957945" description="Alpha-conotoxin GIB" evidence="6">
    <location>
        <begin position="50"/>
        <end position="64"/>
    </location>
</feature>
<feature type="modified residue" description="Glycine amide" evidence="6">
    <location>
        <position position="64"/>
    </location>
</feature>
<feature type="disulfide bond" evidence="1">
    <location>
        <begin position="51"/>
        <end position="56"/>
    </location>
</feature>
<feature type="disulfide bond" evidence="1">
    <location>
        <begin position="52"/>
        <end position="62"/>
    </location>
</feature>
<comment type="function">
    <text evidence="3">Alpha-conotoxins act on postsynaptic membranes, they bind to the nicotinic acetylcholine receptors (nAChR) and thus inhibit them. Both the globular (with C1-C3; C2-C4 disulfide pattern) and ribbon (C1-C4; C2-C3) isomers reversibly inhibit human muscle-type alpha-1-beta-1-delta-epsilon/CHRNA1-CHRNB1-CHRND-CHRNE nAChRs (IC(50)=116 nM and IC(50)=643 nM, respectively) (PubMed:34062129). Both isomers also inhibit alpha-7/CHRNA7 and alpha-9-alpha-10/CHRNA9-CHRNA10 (IC(50)=1113 nM by globular isomer) nAChRs (PubMed:34062129).</text>
</comment>
<comment type="subcellular location">
    <subcellularLocation>
        <location evidence="6">Secreted</location>
    </subcellularLocation>
</comment>
<comment type="tissue specificity">
    <text evidence="6">Expressed by the venom duct.</text>
</comment>
<comment type="domain">
    <text evidence="5">The cysteine framework is I (CC-C-C). Alpha3/5 pattern.</text>
</comment>
<comment type="miscellaneous">
    <text evidence="3">Both the globular (with C1-C3; C2-C4 disulfide pattern) and ribbon (C1-C4; C2-C3) isomers shows no or very weak activity on alpha-3-beta-2/CHRNA3-CHRNB2, alpha-3-beta-4/CHRNA3-CHRNB4, and alpha-4-beta-2/CHRNA4-CHRNB2.</text>
</comment>
<comment type="similarity">
    <text evidence="5">Belongs to the conotoxin A superfamily.</text>
</comment>
<sequence>MGMRMMFTVFLLVVLATTVVSFPSERASDGRDDTAKDEGSDMEKLVEKKECCNPACGRHYSCKGGR</sequence>
<reference evidence="7" key="1">
    <citation type="journal article" date="2014" name="Nat. Commun.">
        <title>Evolution of separate predation- and defence-evoked venoms in carnivorous cone snails.</title>
        <authorList>
            <person name="Dutertre S."/>
            <person name="Jin A.-H."/>
            <person name="Vetter I."/>
            <person name="Hamilton B."/>
            <person name="Sunagar K."/>
            <person name="Lavergne V."/>
            <person name="Dutertre V."/>
            <person name="Fry B.G."/>
            <person name="Antunes A."/>
            <person name="Venter D.J."/>
            <person name="Alewood P.F."/>
            <person name="Lewis R.J."/>
        </authorList>
    </citation>
    <scope>NUCLEOTIDE SEQUENCE [MRNA]</scope>
    <source>
        <tissue>Venom duct</tissue>
    </source>
</reference>
<reference key="2">
    <citation type="journal article" date="2021" name="Biochem. Pharmacol.">
        <title>Globular and ribbon isomers of Conus geographus alpha-conotoxins antagonize human nicotinic acetylcholine receptors.</title>
        <authorList>
            <person name="Tae H.S."/>
            <person name="Gao B."/>
            <person name="Jin A.H."/>
            <person name="Alewood P.F."/>
            <person name="Adams D.J."/>
        </authorList>
    </citation>
    <scope>SYNTHESIS OF 50-64 AS GLOBULAR AND RIBBON ISOMER</scope>
    <scope>FUNCTION</scope>
    <scope>PROBABLE AMIDATION AT GLY-64</scope>
</reference>
<dbReference type="EMBL" id="AB910808">
    <property type="protein sequence ID" value="BAO65576.1"/>
    <property type="molecule type" value="mRNA"/>
</dbReference>
<dbReference type="GO" id="GO:0005576">
    <property type="term" value="C:extracellular region"/>
    <property type="evidence" value="ECO:0007669"/>
    <property type="project" value="UniProtKB-SubCell"/>
</dbReference>
<dbReference type="GO" id="GO:0035792">
    <property type="term" value="C:host cell postsynaptic membrane"/>
    <property type="evidence" value="ECO:0007669"/>
    <property type="project" value="UniProtKB-KW"/>
</dbReference>
<dbReference type="GO" id="GO:0030550">
    <property type="term" value="F:acetylcholine receptor inhibitor activity"/>
    <property type="evidence" value="ECO:0007669"/>
    <property type="project" value="UniProtKB-KW"/>
</dbReference>
<dbReference type="GO" id="GO:0090729">
    <property type="term" value="F:toxin activity"/>
    <property type="evidence" value="ECO:0007669"/>
    <property type="project" value="UniProtKB-KW"/>
</dbReference>
<dbReference type="InterPro" id="IPR009958">
    <property type="entry name" value="Conotoxin_a-typ"/>
</dbReference>
<dbReference type="InterPro" id="IPR018072">
    <property type="entry name" value="Conotoxin_a-typ_CS"/>
</dbReference>
<dbReference type="Pfam" id="PF07365">
    <property type="entry name" value="Toxin_8"/>
    <property type="match status" value="1"/>
</dbReference>
<dbReference type="PROSITE" id="PS60014">
    <property type="entry name" value="ALPHA_CONOTOXIN"/>
    <property type="match status" value="1"/>
</dbReference>
<keyword id="KW-0008">Acetylcholine receptor inhibiting toxin</keyword>
<keyword id="KW-0027">Amidation</keyword>
<keyword id="KW-0165">Cleavage on pair of basic residues</keyword>
<keyword id="KW-1015">Disulfide bond</keyword>
<keyword id="KW-0528">Neurotoxin</keyword>
<keyword id="KW-0629">Postsynaptic neurotoxin</keyword>
<keyword id="KW-0964">Secreted</keyword>
<keyword id="KW-0732">Signal</keyword>
<keyword id="KW-0800">Toxin</keyword>
<proteinExistence type="evidence at protein level"/>
<protein>
    <recommendedName>
        <fullName evidence="4">Alpha-conotoxin GIB</fullName>
    </recommendedName>
</protein>